<comment type="function">
    <text evidence="1">This hormone, released from cells in the corpora cardiaca, causes release of diglycerides from the fat body and stimulation of muscles to use these diglycerides as an energy source during energy-demanding processes.</text>
</comment>
<comment type="subcellular location">
    <subcellularLocation>
        <location evidence="5">Secreted</location>
    </subcellularLocation>
</comment>
<comment type="tissue specificity">
    <text evidence="3">Expressed in antennal lobe (AL), corpora cardiaca (CC), corpora allata (CA) and gnathal ganglion (GNG) (at protein level). Expression in CC and CA detected in all animals, expression in GNG in some animals and in AL in few animals (at protein level).</text>
</comment>
<comment type="mass spectrometry"/>
<comment type="similarity">
    <text evidence="5">Belongs to the AKH/HRTH/RPCH family.</text>
</comment>
<comment type="caution">
    <text evidence="5">The mature peptide AKH-1 is also encoded by another precursor (AC C0HL91).</text>
</comment>
<comment type="caution">
    <text evidence="5">Further mature peptides might exist.</text>
</comment>
<name>AKH1B_AGRIP</name>
<evidence type="ECO:0000250" key="1">
    <source>
        <dbReference type="UniProtKB" id="P55319"/>
    </source>
</evidence>
<evidence type="ECO:0000255" key="2"/>
<evidence type="ECO:0000269" key="3">
    <source>
    </source>
</evidence>
<evidence type="ECO:0000303" key="4">
    <source>
    </source>
</evidence>
<evidence type="ECO:0000305" key="5"/>
<evidence type="ECO:0000305" key="6">
    <source>
    </source>
</evidence>
<accession>C0HL92</accession>
<accession>C0HKR0</accession>
<proteinExistence type="evidence at protein level"/>
<feature type="signal peptide" evidence="2">
    <location>
        <begin position="1"/>
        <end position="20"/>
    </location>
</feature>
<feature type="peptide" id="PRO_0000444167" description="Adipokinetic hormone 1" evidence="3">
    <location>
        <begin position="21"/>
        <end position="30"/>
    </location>
</feature>
<feature type="propeptide" id="PRO_0000444168" evidence="6">
    <location>
        <begin position="34"/>
        <end position="68"/>
    </location>
</feature>
<feature type="modified residue" description="Pyrrolidone carboxylic acid" evidence="3">
    <location>
        <position position="21"/>
    </location>
</feature>
<feature type="modified residue" description="Glycine amide" evidence="3">
    <location>
        <position position="30"/>
    </location>
</feature>
<protein>
    <recommendedName>
        <fullName evidence="1">Adipokinetic prohormone type 1</fullName>
    </recommendedName>
    <component>
        <recommendedName>
            <fullName evidence="4">Adipokinetic hormone 1</fullName>
            <shortName evidence="4">AKH-1</shortName>
        </recommendedName>
    </component>
</protein>
<keyword id="KW-0027">Amidation</keyword>
<keyword id="KW-0165">Cleavage on pair of basic residues</keyword>
<keyword id="KW-0903">Direct protein sequencing</keyword>
<keyword id="KW-0372">Hormone</keyword>
<keyword id="KW-0527">Neuropeptide</keyword>
<keyword id="KW-0873">Pyrrolidone carboxylic acid</keyword>
<keyword id="KW-0964">Secreted</keyword>
<keyword id="KW-0732">Signal</keyword>
<sequence>MNKIYFVIVFVACFCLFAEAQLTFTSSWGGGKRSGVAPMSCKNEEAVATIFKLIQNEAERFIICQQKS</sequence>
<dbReference type="GO" id="GO:0005576">
    <property type="term" value="C:extracellular region"/>
    <property type="evidence" value="ECO:0007669"/>
    <property type="project" value="UniProtKB-SubCell"/>
</dbReference>
<dbReference type="GO" id="GO:0005179">
    <property type="term" value="F:hormone activity"/>
    <property type="evidence" value="ECO:0007669"/>
    <property type="project" value="UniProtKB-KW"/>
</dbReference>
<dbReference type="GO" id="GO:0007218">
    <property type="term" value="P:neuropeptide signaling pathway"/>
    <property type="evidence" value="ECO:0007669"/>
    <property type="project" value="UniProtKB-KW"/>
</dbReference>
<dbReference type="InterPro" id="IPR002047">
    <property type="entry name" value="Adipokinetic_hormone_CS"/>
</dbReference>
<dbReference type="InterPro" id="IPR010475">
    <property type="entry name" value="AKH/RPCH_hormone"/>
</dbReference>
<dbReference type="Pfam" id="PF06377">
    <property type="entry name" value="Adipokin_hormo"/>
    <property type="match status" value="1"/>
</dbReference>
<dbReference type="PROSITE" id="PS00256">
    <property type="entry name" value="AKH"/>
    <property type="match status" value="1"/>
</dbReference>
<reference evidence="5" key="1">
    <citation type="journal article" date="2018" name="J. Proteome Res.">
        <title>Mating-induced differential peptidomics of neuropeptides and protein hormones in Agrotis ipsilon moths.</title>
        <authorList>
            <person name="Diesner M."/>
            <person name="Gallot A."/>
            <person name="Binz H."/>
            <person name="Gaertner C."/>
            <person name="Vitecek S."/>
            <person name="Kahnt J."/>
            <person name="Schachtner J."/>
            <person name="Jacquin-Joly E."/>
            <person name="Gadenne C."/>
        </authorList>
    </citation>
    <scope>NUCLEOTIDE SEQUENCE [MRNA]</scope>
    <scope>PROTEIN SEQUENCE OF 21-30</scope>
    <scope>TISSUE SPECIFICITY</scope>
    <scope>MASS SPECTROMETRY</scope>
    <scope>IDENTIFICATION BY MASS SPECTROMETRY</scope>
    <scope>AMIDATION AT GLY-30</scope>
    <scope>PYROGLUTAMATE FORMATION AT GLN-21</scope>
</reference>
<organism>
    <name type="scientific">Agrotis ipsilon</name>
    <name type="common">Black cutworm moth</name>
    <dbReference type="NCBI Taxonomy" id="56364"/>
    <lineage>
        <taxon>Eukaryota</taxon>
        <taxon>Metazoa</taxon>
        <taxon>Ecdysozoa</taxon>
        <taxon>Arthropoda</taxon>
        <taxon>Hexapoda</taxon>
        <taxon>Insecta</taxon>
        <taxon>Pterygota</taxon>
        <taxon>Neoptera</taxon>
        <taxon>Endopterygota</taxon>
        <taxon>Lepidoptera</taxon>
        <taxon>Glossata</taxon>
        <taxon>Ditrysia</taxon>
        <taxon>Noctuoidea</taxon>
        <taxon>Noctuidae</taxon>
        <taxon>Noctuinae</taxon>
        <taxon>Noctuini</taxon>
        <taxon>Agrotis</taxon>
    </lineage>
</organism>